<accession>Q8ZEH5</accession>
<accession>Q0WEW9</accession>
<comment type="function">
    <text evidence="1">Plays a role in cell envelope biogenesis, maintenance of cell envelope integrity and membrane homeostasis.</text>
</comment>
<comment type="subcellular location">
    <subcellularLocation>
        <location evidence="1">Cell inner membrane</location>
        <topology evidence="1">Multi-pass membrane protein</topology>
    </subcellularLocation>
</comment>
<comment type="similarity">
    <text evidence="1">Belongs to the YciB family.</text>
</comment>
<reference key="1">
    <citation type="journal article" date="2001" name="Nature">
        <title>Genome sequence of Yersinia pestis, the causative agent of plague.</title>
        <authorList>
            <person name="Parkhill J."/>
            <person name="Wren B.W."/>
            <person name="Thomson N.R."/>
            <person name="Titball R.W."/>
            <person name="Holden M.T.G."/>
            <person name="Prentice M.B."/>
            <person name="Sebaihia M."/>
            <person name="James K.D."/>
            <person name="Churcher C.M."/>
            <person name="Mungall K.L."/>
            <person name="Baker S."/>
            <person name="Basham D."/>
            <person name="Bentley S.D."/>
            <person name="Brooks K."/>
            <person name="Cerdeno-Tarraga A.-M."/>
            <person name="Chillingworth T."/>
            <person name="Cronin A."/>
            <person name="Davies R.M."/>
            <person name="Davis P."/>
            <person name="Dougan G."/>
            <person name="Feltwell T."/>
            <person name="Hamlin N."/>
            <person name="Holroyd S."/>
            <person name="Jagels K."/>
            <person name="Karlyshev A.V."/>
            <person name="Leather S."/>
            <person name="Moule S."/>
            <person name="Oyston P.C.F."/>
            <person name="Quail M.A."/>
            <person name="Rutherford K.M."/>
            <person name="Simmonds M."/>
            <person name="Skelton J."/>
            <person name="Stevens K."/>
            <person name="Whitehead S."/>
            <person name="Barrell B.G."/>
        </authorList>
    </citation>
    <scope>NUCLEOTIDE SEQUENCE [LARGE SCALE GENOMIC DNA]</scope>
    <source>
        <strain>CO-92 / Biovar Orientalis</strain>
    </source>
</reference>
<reference key="2">
    <citation type="journal article" date="2002" name="J. Bacteriol.">
        <title>Genome sequence of Yersinia pestis KIM.</title>
        <authorList>
            <person name="Deng W."/>
            <person name="Burland V."/>
            <person name="Plunkett G. III"/>
            <person name="Boutin A."/>
            <person name="Mayhew G.F."/>
            <person name="Liss P."/>
            <person name="Perna N.T."/>
            <person name="Rose D.J."/>
            <person name="Mau B."/>
            <person name="Zhou S."/>
            <person name="Schwartz D.C."/>
            <person name="Fetherston J.D."/>
            <person name="Lindler L.E."/>
            <person name="Brubaker R.R."/>
            <person name="Plano G.V."/>
            <person name="Straley S.C."/>
            <person name="McDonough K.A."/>
            <person name="Nilles M.L."/>
            <person name="Matson J.S."/>
            <person name="Blattner F.R."/>
            <person name="Perry R.D."/>
        </authorList>
    </citation>
    <scope>NUCLEOTIDE SEQUENCE [LARGE SCALE GENOMIC DNA]</scope>
    <source>
        <strain>KIM10+ / Biovar Mediaevalis</strain>
    </source>
</reference>
<reference key="3">
    <citation type="journal article" date="2004" name="DNA Res.">
        <title>Complete genome sequence of Yersinia pestis strain 91001, an isolate avirulent to humans.</title>
        <authorList>
            <person name="Song Y."/>
            <person name="Tong Z."/>
            <person name="Wang J."/>
            <person name="Wang L."/>
            <person name="Guo Z."/>
            <person name="Han Y."/>
            <person name="Zhang J."/>
            <person name="Pei D."/>
            <person name="Zhou D."/>
            <person name="Qin H."/>
            <person name="Pang X."/>
            <person name="Han Y."/>
            <person name="Zhai J."/>
            <person name="Li M."/>
            <person name="Cui B."/>
            <person name="Qi Z."/>
            <person name="Jin L."/>
            <person name="Dai R."/>
            <person name="Chen F."/>
            <person name="Li S."/>
            <person name="Ye C."/>
            <person name="Du Z."/>
            <person name="Lin W."/>
            <person name="Wang J."/>
            <person name="Yu J."/>
            <person name="Yang H."/>
            <person name="Wang J."/>
            <person name="Huang P."/>
            <person name="Yang R."/>
        </authorList>
    </citation>
    <scope>NUCLEOTIDE SEQUENCE [LARGE SCALE GENOMIC DNA]</scope>
    <source>
        <strain>91001 / Biovar Mediaevalis</strain>
    </source>
</reference>
<proteinExistence type="inferred from homology"/>
<keyword id="KW-0997">Cell inner membrane</keyword>
<keyword id="KW-1003">Cell membrane</keyword>
<keyword id="KW-0472">Membrane</keyword>
<keyword id="KW-1185">Reference proteome</keyword>
<keyword id="KW-0812">Transmembrane</keyword>
<keyword id="KW-1133">Transmembrane helix</keyword>
<organism>
    <name type="scientific">Yersinia pestis</name>
    <dbReference type="NCBI Taxonomy" id="632"/>
    <lineage>
        <taxon>Bacteria</taxon>
        <taxon>Pseudomonadati</taxon>
        <taxon>Pseudomonadota</taxon>
        <taxon>Gammaproteobacteria</taxon>
        <taxon>Enterobacterales</taxon>
        <taxon>Yersiniaceae</taxon>
        <taxon>Yersinia</taxon>
    </lineage>
</organism>
<name>YCIB_YERPE</name>
<gene>
    <name evidence="1" type="primary">yciB</name>
    <name type="ordered locus">YPO2196</name>
    <name type="ordered locus">y2040</name>
    <name type="ordered locus">YP_1995</name>
</gene>
<feature type="chain" id="PRO_0000206556" description="Inner membrane-spanning protein YciB">
    <location>
        <begin position="1"/>
        <end position="180"/>
    </location>
</feature>
<feature type="transmembrane region" description="Helical" evidence="1">
    <location>
        <begin position="22"/>
        <end position="42"/>
    </location>
</feature>
<feature type="transmembrane region" description="Helical" evidence="1">
    <location>
        <begin position="50"/>
        <end position="70"/>
    </location>
</feature>
<feature type="transmembrane region" description="Helical" evidence="1">
    <location>
        <begin position="72"/>
        <end position="92"/>
    </location>
</feature>
<feature type="transmembrane region" description="Helical" evidence="1">
    <location>
        <begin position="121"/>
        <end position="141"/>
    </location>
</feature>
<feature type="transmembrane region" description="Helical" evidence="1">
    <location>
        <begin position="149"/>
        <end position="169"/>
    </location>
</feature>
<protein>
    <recommendedName>
        <fullName evidence="1">Inner membrane-spanning protein YciB</fullName>
    </recommendedName>
</protein>
<dbReference type="EMBL" id="AL590842">
    <property type="protein sequence ID" value="CAL20826.1"/>
    <property type="molecule type" value="Genomic_DNA"/>
</dbReference>
<dbReference type="EMBL" id="AE009952">
    <property type="protein sequence ID" value="AAM85606.1"/>
    <property type="molecule type" value="Genomic_DNA"/>
</dbReference>
<dbReference type="EMBL" id="AE017042">
    <property type="protein sequence ID" value="AAS62212.1"/>
    <property type="molecule type" value="Genomic_DNA"/>
</dbReference>
<dbReference type="PIR" id="AG0267">
    <property type="entry name" value="AG0267"/>
</dbReference>
<dbReference type="RefSeq" id="WP_002210640.1">
    <property type="nucleotide sequence ID" value="NZ_WUCM01000001.1"/>
</dbReference>
<dbReference type="RefSeq" id="YP_002347169.1">
    <property type="nucleotide sequence ID" value="NC_003143.1"/>
</dbReference>
<dbReference type="STRING" id="214092.YPO2196"/>
<dbReference type="PaxDb" id="214092-YPO2196"/>
<dbReference type="DNASU" id="1146987"/>
<dbReference type="EnsemblBacteria" id="AAS62212">
    <property type="protein sequence ID" value="AAS62212"/>
    <property type="gene ID" value="YP_1995"/>
</dbReference>
<dbReference type="KEGG" id="ype:YPO2196"/>
<dbReference type="KEGG" id="ypk:y2040"/>
<dbReference type="KEGG" id="ypm:YP_1995"/>
<dbReference type="PATRIC" id="fig|214092.21.peg.2592"/>
<dbReference type="eggNOG" id="COG2917">
    <property type="taxonomic scope" value="Bacteria"/>
</dbReference>
<dbReference type="HOGENOM" id="CLU_089554_2_0_6"/>
<dbReference type="OMA" id="VWRTQST"/>
<dbReference type="OrthoDB" id="9788219at2"/>
<dbReference type="Proteomes" id="UP000000815">
    <property type="component" value="Chromosome"/>
</dbReference>
<dbReference type="Proteomes" id="UP000001019">
    <property type="component" value="Chromosome"/>
</dbReference>
<dbReference type="Proteomes" id="UP000002490">
    <property type="component" value="Chromosome"/>
</dbReference>
<dbReference type="GO" id="GO:0005886">
    <property type="term" value="C:plasma membrane"/>
    <property type="evidence" value="ECO:0000318"/>
    <property type="project" value="GO_Central"/>
</dbReference>
<dbReference type="HAMAP" id="MF_00189">
    <property type="entry name" value="YciB"/>
    <property type="match status" value="1"/>
</dbReference>
<dbReference type="InterPro" id="IPR006008">
    <property type="entry name" value="YciB"/>
</dbReference>
<dbReference type="NCBIfam" id="TIGR00997">
    <property type="entry name" value="ispZ"/>
    <property type="match status" value="1"/>
</dbReference>
<dbReference type="NCBIfam" id="NF001324">
    <property type="entry name" value="PRK00259.1-2"/>
    <property type="match status" value="1"/>
</dbReference>
<dbReference type="NCBIfam" id="NF001325">
    <property type="entry name" value="PRK00259.1-3"/>
    <property type="match status" value="1"/>
</dbReference>
<dbReference type="NCBIfam" id="NF001326">
    <property type="entry name" value="PRK00259.1-4"/>
    <property type="match status" value="1"/>
</dbReference>
<dbReference type="PANTHER" id="PTHR36917:SF1">
    <property type="entry name" value="INNER MEMBRANE-SPANNING PROTEIN YCIB"/>
    <property type="match status" value="1"/>
</dbReference>
<dbReference type="PANTHER" id="PTHR36917">
    <property type="entry name" value="INTRACELLULAR SEPTATION PROTEIN A-RELATED"/>
    <property type="match status" value="1"/>
</dbReference>
<dbReference type="Pfam" id="PF04279">
    <property type="entry name" value="IspA"/>
    <property type="match status" value="1"/>
</dbReference>
<evidence type="ECO:0000255" key="1">
    <source>
        <dbReference type="HAMAP-Rule" id="MF_00189"/>
    </source>
</evidence>
<sequence>MKQLLDFLPLVVFFIFYKMYDIFVASGALIVATLVALAFTWLKYRKVEKMTLVTAAMVLVFGTLTLAFHSDLFIKWKVTVLYVLFALALLVSQWVMKKPLIQRMLGKELTLPDKVWSTLNLSWAIFFLVCGLLNIYVAFWLPQDIWVNFKVFGLTALTLIFTLISGVYIYRHMPEEQKKS</sequence>